<keyword id="KW-0004">4Fe-4S</keyword>
<keyword id="KW-0408">Iron</keyword>
<keyword id="KW-0411">Iron-sulfur</keyword>
<keyword id="KW-0414">Isoprene biosynthesis</keyword>
<keyword id="KW-0479">Metal-binding</keyword>
<keyword id="KW-0560">Oxidoreductase</keyword>
<accession>A6WQP7</accession>
<organism>
    <name type="scientific">Shewanella baltica (strain OS185)</name>
    <dbReference type="NCBI Taxonomy" id="402882"/>
    <lineage>
        <taxon>Bacteria</taxon>
        <taxon>Pseudomonadati</taxon>
        <taxon>Pseudomonadota</taxon>
        <taxon>Gammaproteobacteria</taxon>
        <taxon>Alteromonadales</taxon>
        <taxon>Shewanellaceae</taxon>
        <taxon>Shewanella</taxon>
    </lineage>
</organism>
<evidence type="ECO:0000255" key="1">
    <source>
        <dbReference type="HAMAP-Rule" id="MF_00159"/>
    </source>
</evidence>
<feature type="chain" id="PRO_1000011516" description="4-hydroxy-3-methylbut-2-en-1-yl diphosphate synthase (flavodoxin)">
    <location>
        <begin position="1"/>
        <end position="371"/>
    </location>
</feature>
<feature type="binding site" evidence="1">
    <location>
        <position position="270"/>
    </location>
    <ligand>
        <name>[4Fe-4S] cluster</name>
        <dbReference type="ChEBI" id="CHEBI:49883"/>
    </ligand>
</feature>
<feature type="binding site" evidence="1">
    <location>
        <position position="273"/>
    </location>
    <ligand>
        <name>[4Fe-4S] cluster</name>
        <dbReference type="ChEBI" id="CHEBI:49883"/>
    </ligand>
</feature>
<feature type="binding site" evidence="1">
    <location>
        <position position="305"/>
    </location>
    <ligand>
        <name>[4Fe-4S] cluster</name>
        <dbReference type="ChEBI" id="CHEBI:49883"/>
    </ligand>
</feature>
<feature type="binding site" evidence="1">
    <location>
        <position position="312"/>
    </location>
    <ligand>
        <name>[4Fe-4S] cluster</name>
        <dbReference type="ChEBI" id="CHEBI:49883"/>
    </ligand>
</feature>
<name>ISPG_SHEB8</name>
<protein>
    <recommendedName>
        <fullName evidence="1">4-hydroxy-3-methylbut-2-en-1-yl diphosphate synthase (flavodoxin)</fullName>
        <ecNumber evidence="1">1.17.7.3</ecNumber>
    </recommendedName>
    <alternativeName>
        <fullName evidence="1">1-hydroxy-2-methyl-2-(E)-butenyl 4-diphosphate synthase</fullName>
    </alternativeName>
</protein>
<proteinExistence type="inferred from homology"/>
<gene>
    <name evidence="1" type="primary">ispG</name>
    <name type="ordered locus">Shew185_3005</name>
</gene>
<dbReference type="EC" id="1.17.7.3" evidence="1"/>
<dbReference type="EMBL" id="CP000753">
    <property type="protein sequence ID" value="ABS09136.1"/>
    <property type="molecule type" value="Genomic_DNA"/>
</dbReference>
<dbReference type="RefSeq" id="WP_006082482.1">
    <property type="nucleotide sequence ID" value="NC_009665.1"/>
</dbReference>
<dbReference type="SMR" id="A6WQP7"/>
<dbReference type="GeneID" id="11773204"/>
<dbReference type="KEGG" id="sbm:Shew185_3005"/>
<dbReference type="HOGENOM" id="CLU_042258_0_0_6"/>
<dbReference type="UniPathway" id="UPA00056">
    <property type="reaction ID" value="UER00096"/>
</dbReference>
<dbReference type="GO" id="GO:0051539">
    <property type="term" value="F:4 iron, 4 sulfur cluster binding"/>
    <property type="evidence" value="ECO:0007669"/>
    <property type="project" value="UniProtKB-UniRule"/>
</dbReference>
<dbReference type="GO" id="GO:0046429">
    <property type="term" value="F:4-hydroxy-3-methylbut-2-en-1-yl diphosphate synthase activity (ferredoxin)"/>
    <property type="evidence" value="ECO:0007669"/>
    <property type="project" value="UniProtKB-UniRule"/>
</dbReference>
<dbReference type="GO" id="GO:0141197">
    <property type="term" value="F:4-hydroxy-3-methylbut-2-enyl-diphosphate synthase activity (flavodoxin)"/>
    <property type="evidence" value="ECO:0007669"/>
    <property type="project" value="UniProtKB-EC"/>
</dbReference>
<dbReference type="GO" id="GO:0005506">
    <property type="term" value="F:iron ion binding"/>
    <property type="evidence" value="ECO:0007669"/>
    <property type="project" value="InterPro"/>
</dbReference>
<dbReference type="GO" id="GO:0019288">
    <property type="term" value="P:isopentenyl diphosphate biosynthetic process, methylerythritol 4-phosphate pathway"/>
    <property type="evidence" value="ECO:0007669"/>
    <property type="project" value="UniProtKB-UniRule"/>
</dbReference>
<dbReference type="GO" id="GO:0016114">
    <property type="term" value="P:terpenoid biosynthetic process"/>
    <property type="evidence" value="ECO:0007669"/>
    <property type="project" value="InterPro"/>
</dbReference>
<dbReference type="FunFam" id="3.20.20.20:FF:000001">
    <property type="entry name" value="4-hydroxy-3-methylbut-2-en-1-yl diphosphate synthase (flavodoxin)"/>
    <property type="match status" value="1"/>
</dbReference>
<dbReference type="FunFam" id="3.30.413.10:FF:000002">
    <property type="entry name" value="4-hydroxy-3-methylbut-2-en-1-yl diphosphate synthase (flavodoxin)"/>
    <property type="match status" value="1"/>
</dbReference>
<dbReference type="Gene3D" id="3.20.20.20">
    <property type="entry name" value="Dihydropteroate synthase-like"/>
    <property type="match status" value="1"/>
</dbReference>
<dbReference type="Gene3D" id="3.30.413.10">
    <property type="entry name" value="Sulfite Reductase Hemoprotein, domain 1"/>
    <property type="match status" value="1"/>
</dbReference>
<dbReference type="HAMAP" id="MF_00159">
    <property type="entry name" value="IspG"/>
    <property type="match status" value="1"/>
</dbReference>
<dbReference type="InterPro" id="IPR011005">
    <property type="entry name" value="Dihydropteroate_synth-like_sf"/>
</dbReference>
<dbReference type="InterPro" id="IPR016425">
    <property type="entry name" value="IspG_bac"/>
</dbReference>
<dbReference type="InterPro" id="IPR004588">
    <property type="entry name" value="IspG_bac-typ"/>
</dbReference>
<dbReference type="InterPro" id="IPR045854">
    <property type="entry name" value="NO2/SO3_Rdtase_4Fe4S_sf"/>
</dbReference>
<dbReference type="NCBIfam" id="TIGR00612">
    <property type="entry name" value="ispG_gcpE"/>
    <property type="match status" value="1"/>
</dbReference>
<dbReference type="NCBIfam" id="NF001540">
    <property type="entry name" value="PRK00366.1"/>
    <property type="match status" value="1"/>
</dbReference>
<dbReference type="PANTHER" id="PTHR30454">
    <property type="entry name" value="4-HYDROXY-3-METHYLBUT-2-EN-1-YL DIPHOSPHATE SYNTHASE"/>
    <property type="match status" value="1"/>
</dbReference>
<dbReference type="PANTHER" id="PTHR30454:SF0">
    <property type="entry name" value="4-HYDROXY-3-METHYLBUT-2-EN-1-YL DIPHOSPHATE SYNTHASE (FERREDOXIN), CHLOROPLASTIC"/>
    <property type="match status" value="1"/>
</dbReference>
<dbReference type="Pfam" id="PF04551">
    <property type="entry name" value="GcpE"/>
    <property type="match status" value="1"/>
</dbReference>
<dbReference type="PIRSF" id="PIRSF004640">
    <property type="entry name" value="IspG"/>
    <property type="match status" value="1"/>
</dbReference>
<dbReference type="SUPFAM" id="SSF51717">
    <property type="entry name" value="Dihydropteroate synthetase-like"/>
    <property type="match status" value="1"/>
</dbReference>
<dbReference type="SUPFAM" id="SSF56014">
    <property type="entry name" value="Nitrite and sulphite reductase 4Fe-4S domain-like"/>
    <property type="match status" value="1"/>
</dbReference>
<reference key="1">
    <citation type="submission" date="2007-07" db="EMBL/GenBank/DDBJ databases">
        <title>Complete sequence of chromosome of Shewanella baltica OS185.</title>
        <authorList>
            <consortium name="US DOE Joint Genome Institute"/>
            <person name="Copeland A."/>
            <person name="Lucas S."/>
            <person name="Lapidus A."/>
            <person name="Barry K."/>
            <person name="Glavina del Rio T."/>
            <person name="Dalin E."/>
            <person name="Tice H."/>
            <person name="Pitluck S."/>
            <person name="Sims D."/>
            <person name="Brettin T."/>
            <person name="Bruce D."/>
            <person name="Detter J.C."/>
            <person name="Han C."/>
            <person name="Schmutz J."/>
            <person name="Larimer F."/>
            <person name="Land M."/>
            <person name="Hauser L."/>
            <person name="Kyrpides N."/>
            <person name="Mikhailova N."/>
            <person name="Brettar I."/>
            <person name="Rodrigues J."/>
            <person name="Konstantinidis K."/>
            <person name="Tiedje J."/>
            <person name="Richardson P."/>
        </authorList>
    </citation>
    <scope>NUCLEOTIDE SEQUENCE [LARGE SCALE GENOMIC DNA]</scope>
    <source>
        <strain>OS185</strain>
    </source>
</reference>
<comment type="function">
    <text evidence="1">Converts 2C-methyl-D-erythritol 2,4-cyclodiphosphate (ME-2,4cPP) into 1-hydroxy-2-methyl-2-(E)-butenyl 4-diphosphate.</text>
</comment>
<comment type="catalytic activity">
    <reaction evidence="1">
        <text>(2E)-4-hydroxy-3-methylbut-2-enyl diphosphate + oxidized [flavodoxin] + H2O + 2 H(+) = 2-C-methyl-D-erythritol 2,4-cyclic diphosphate + reduced [flavodoxin]</text>
        <dbReference type="Rhea" id="RHEA:43604"/>
        <dbReference type="Rhea" id="RHEA-COMP:10622"/>
        <dbReference type="Rhea" id="RHEA-COMP:10623"/>
        <dbReference type="ChEBI" id="CHEBI:15377"/>
        <dbReference type="ChEBI" id="CHEBI:15378"/>
        <dbReference type="ChEBI" id="CHEBI:57618"/>
        <dbReference type="ChEBI" id="CHEBI:58210"/>
        <dbReference type="ChEBI" id="CHEBI:58483"/>
        <dbReference type="ChEBI" id="CHEBI:128753"/>
        <dbReference type="EC" id="1.17.7.3"/>
    </reaction>
</comment>
<comment type="cofactor">
    <cofactor evidence="1">
        <name>[4Fe-4S] cluster</name>
        <dbReference type="ChEBI" id="CHEBI:49883"/>
    </cofactor>
    <text evidence="1">Binds 1 [4Fe-4S] cluster.</text>
</comment>
<comment type="pathway">
    <text evidence="1">Isoprenoid biosynthesis; isopentenyl diphosphate biosynthesis via DXP pathway; isopentenyl diphosphate from 1-deoxy-D-xylulose 5-phosphate: step 5/6.</text>
</comment>
<comment type="similarity">
    <text evidence="1">Belongs to the IspG family.</text>
</comment>
<sequence length="371" mass="40625">MYNETPIKRRPSTRIYVGNVPIGDGAPIAVQSMTNTKTTDVEATIAQIRALEKVGADIVRVSVPTMDAAEAFKLIKQAVNVPLVADIHFDYRIALKVAEYGVDCLRINPGNIGNEERIRSVVECARDHNIPIRIGVNGGSLEKDLMDKYKEPTPQALLESAMRHVDILDRLNFDQFKVSVKASDVFLAVESYRLLAKQIRQPLHLGITEAGGARAGSVKSAVGLGMLLAEGIGDTLRISLAADPVEEIKVGFDILKSLRIRSRGINFIACPSCSRQEFDVISTVNELERRLEDVTTAMDVSIIGCVVNGPGEALVSHIGLTGGHNKSGYYDEGERQKERFDNDNIVDSLEAKIRAKASQMANRIQIKDTTE</sequence>